<organism>
    <name type="scientific">Escherichia coli (strain 55989 / EAEC)</name>
    <dbReference type="NCBI Taxonomy" id="585055"/>
    <lineage>
        <taxon>Bacteria</taxon>
        <taxon>Pseudomonadati</taxon>
        <taxon>Pseudomonadota</taxon>
        <taxon>Gammaproteobacteria</taxon>
        <taxon>Enterobacterales</taxon>
        <taxon>Enterobacteriaceae</taxon>
        <taxon>Escherichia</taxon>
    </lineage>
</organism>
<comment type="function">
    <text evidence="1">Catalyzes the conversion of acetaldehyde to acetyl-CoA, using NAD(+) and coenzyme A. Is the final enzyme in the meta-cleavage pathway for the degradation of aromatic compounds.</text>
</comment>
<comment type="catalytic activity">
    <reaction evidence="1">
        <text>acetaldehyde + NAD(+) + CoA = acetyl-CoA + NADH + H(+)</text>
        <dbReference type="Rhea" id="RHEA:23288"/>
        <dbReference type="ChEBI" id="CHEBI:15343"/>
        <dbReference type="ChEBI" id="CHEBI:15378"/>
        <dbReference type="ChEBI" id="CHEBI:57287"/>
        <dbReference type="ChEBI" id="CHEBI:57288"/>
        <dbReference type="ChEBI" id="CHEBI:57540"/>
        <dbReference type="ChEBI" id="CHEBI:57945"/>
        <dbReference type="EC" id="1.2.1.10"/>
    </reaction>
</comment>
<comment type="pathway">
    <text evidence="1">Aromatic compound metabolism; 3-phenylpropanoate degradation.</text>
</comment>
<comment type="subunit">
    <text evidence="1">Interacts with MhpE.</text>
</comment>
<comment type="similarity">
    <text evidence="1">Belongs to the acetaldehyde dehydrogenase family.</text>
</comment>
<feature type="chain" id="PRO_1000187029" description="Acetaldehyde dehydrogenase">
    <location>
        <begin position="1"/>
        <end position="316"/>
    </location>
</feature>
<feature type="active site" description="Acyl-thioester intermediate" evidence="1">
    <location>
        <position position="131"/>
    </location>
</feature>
<feature type="binding site" evidence="1">
    <location>
        <begin position="11"/>
        <end position="14"/>
    </location>
    <ligand>
        <name>NAD(+)</name>
        <dbReference type="ChEBI" id="CHEBI:57540"/>
    </ligand>
</feature>
<feature type="binding site" evidence="1">
    <location>
        <begin position="162"/>
        <end position="170"/>
    </location>
    <ligand>
        <name>NAD(+)</name>
        <dbReference type="ChEBI" id="CHEBI:57540"/>
    </ligand>
</feature>
<feature type="binding site" evidence="1">
    <location>
        <position position="289"/>
    </location>
    <ligand>
        <name>NAD(+)</name>
        <dbReference type="ChEBI" id="CHEBI:57540"/>
    </ligand>
</feature>
<reference key="1">
    <citation type="journal article" date="2009" name="PLoS Genet.">
        <title>Organised genome dynamics in the Escherichia coli species results in highly diverse adaptive paths.</title>
        <authorList>
            <person name="Touchon M."/>
            <person name="Hoede C."/>
            <person name="Tenaillon O."/>
            <person name="Barbe V."/>
            <person name="Baeriswyl S."/>
            <person name="Bidet P."/>
            <person name="Bingen E."/>
            <person name="Bonacorsi S."/>
            <person name="Bouchier C."/>
            <person name="Bouvet O."/>
            <person name="Calteau A."/>
            <person name="Chiapello H."/>
            <person name="Clermont O."/>
            <person name="Cruveiller S."/>
            <person name="Danchin A."/>
            <person name="Diard M."/>
            <person name="Dossat C."/>
            <person name="Karoui M.E."/>
            <person name="Frapy E."/>
            <person name="Garry L."/>
            <person name="Ghigo J.M."/>
            <person name="Gilles A.M."/>
            <person name="Johnson J."/>
            <person name="Le Bouguenec C."/>
            <person name="Lescat M."/>
            <person name="Mangenot S."/>
            <person name="Martinez-Jehanne V."/>
            <person name="Matic I."/>
            <person name="Nassif X."/>
            <person name="Oztas S."/>
            <person name="Petit M.A."/>
            <person name="Pichon C."/>
            <person name="Rouy Z."/>
            <person name="Ruf C.S."/>
            <person name="Schneider D."/>
            <person name="Tourret J."/>
            <person name="Vacherie B."/>
            <person name="Vallenet D."/>
            <person name="Medigue C."/>
            <person name="Rocha E.P.C."/>
            <person name="Denamur E."/>
        </authorList>
    </citation>
    <scope>NUCLEOTIDE SEQUENCE [LARGE SCALE GENOMIC DNA]</scope>
    <source>
        <strain>55989 / EAEC</strain>
    </source>
</reference>
<evidence type="ECO:0000255" key="1">
    <source>
        <dbReference type="HAMAP-Rule" id="MF_01657"/>
    </source>
</evidence>
<dbReference type="EC" id="1.2.1.10" evidence="1"/>
<dbReference type="EMBL" id="CU928145">
    <property type="protein sequence ID" value="CAU96235.1"/>
    <property type="molecule type" value="Genomic_DNA"/>
</dbReference>
<dbReference type="RefSeq" id="WP_000044314.1">
    <property type="nucleotide sequence ID" value="NC_011748.1"/>
</dbReference>
<dbReference type="SMR" id="B7L507"/>
<dbReference type="GeneID" id="93777104"/>
<dbReference type="KEGG" id="eck:EC55989_0358"/>
<dbReference type="HOGENOM" id="CLU_062208_0_0_6"/>
<dbReference type="UniPathway" id="UPA00714"/>
<dbReference type="Proteomes" id="UP000000746">
    <property type="component" value="Chromosome"/>
</dbReference>
<dbReference type="GO" id="GO:0008774">
    <property type="term" value="F:acetaldehyde dehydrogenase (acetylating) activity"/>
    <property type="evidence" value="ECO:0007669"/>
    <property type="project" value="UniProtKB-UniRule"/>
</dbReference>
<dbReference type="GO" id="GO:0051287">
    <property type="term" value="F:NAD binding"/>
    <property type="evidence" value="ECO:0007669"/>
    <property type="project" value="UniProtKB-UniRule"/>
</dbReference>
<dbReference type="GO" id="GO:0019380">
    <property type="term" value="P:3-phenylpropionate catabolic process"/>
    <property type="evidence" value="ECO:0007669"/>
    <property type="project" value="UniProtKB-UniRule"/>
</dbReference>
<dbReference type="CDD" id="cd23933">
    <property type="entry name" value="ALDH_C"/>
    <property type="match status" value="1"/>
</dbReference>
<dbReference type="FunFam" id="3.30.360.10:FF:000021">
    <property type="entry name" value="Acetaldehyde dehydrogenase"/>
    <property type="match status" value="1"/>
</dbReference>
<dbReference type="Gene3D" id="3.30.360.10">
    <property type="entry name" value="Dihydrodipicolinate Reductase, domain 2"/>
    <property type="match status" value="1"/>
</dbReference>
<dbReference type="Gene3D" id="3.40.50.720">
    <property type="entry name" value="NAD(P)-binding Rossmann-like Domain"/>
    <property type="match status" value="1"/>
</dbReference>
<dbReference type="HAMAP" id="MF_01657">
    <property type="entry name" value="Ac_ald_DH_ac"/>
    <property type="match status" value="1"/>
</dbReference>
<dbReference type="InterPro" id="IPR003361">
    <property type="entry name" value="Acetaldehyde_dehydrogenase"/>
</dbReference>
<dbReference type="InterPro" id="IPR015426">
    <property type="entry name" value="Acetylaldehyde_DH_C"/>
</dbReference>
<dbReference type="InterPro" id="IPR036291">
    <property type="entry name" value="NAD(P)-bd_dom_sf"/>
</dbReference>
<dbReference type="InterPro" id="IPR000534">
    <property type="entry name" value="Semialdehyde_DH_NAD-bd"/>
</dbReference>
<dbReference type="NCBIfam" id="TIGR03215">
    <property type="entry name" value="ac_ald_DH_ac"/>
    <property type="match status" value="1"/>
</dbReference>
<dbReference type="NCBIfam" id="NF006157">
    <property type="entry name" value="PRK08300.1"/>
    <property type="match status" value="1"/>
</dbReference>
<dbReference type="Pfam" id="PF09290">
    <property type="entry name" value="AcetDehyd-dimer"/>
    <property type="match status" value="1"/>
</dbReference>
<dbReference type="Pfam" id="PF01118">
    <property type="entry name" value="Semialdhyde_dh"/>
    <property type="match status" value="1"/>
</dbReference>
<dbReference type="PIRSF" id="PIRSF015689">
    <property type="entry name" value="Actaldh_dh_actl"/>
    <property type="match status" value="1"/>
</dbReference>
<dbReference type="SMART" id="SM00859">
    <property type="entry name" value="Semialdhyde_dh"/>
    <property type="match status" value="1"/>
</dbReference>
<dbReference type="SUPFAM" id="SSF55347">
    <property type="entry name" value="Glyceraldehyde-3-phosphate dehydrogenase-like, C-terminal domain"/>
    <property type="match status" value="1"/>
</dbReference>
<dbReference type="SUPFAM" id="SSF51735">
    <property type="entry name" value="NAD(P)-binding Rossmann-fold domains"/>
    <property type="match status" value="1"/>
</dbReference>
<name>ACDH_ECO55</name>
<gene>
    <name evidence="1" type="primary">mhpF</name>
    <name type="ordered locus">EC55989_0358</name>
</gene>
<accession>B7L507</accession>
<keyword id="KW-0058">Aromatic hydrocarbons catabolism</keyword>
<keyword id="KW-0520">NAD</keyword>
<keyword id="KW-0560">Oxidoreductase</keyword>
<keyword id="KW-1185">Reference proteome</keyword>
<protein>
    <recommendedName>
        <fullName evidence="1">Acetaldehyde dehydrogenase</fullName>
        <ecNumber evidence="1">1.2.1.10</ecNumber>
    </recommendedName>
    <alternativeName>
        <fullName evidence="1">Acetaldehyde dehydrogenase [acetylating]</fullName>
    </alternativeName>
</protein>
<proteinExistence type="inferred from homology"/>
<sequence>MSKRKVAIIGSGNIGTDLMIKILRHGQHLEMAVMVGIDPQSDGLARARRMGVATTHEGVIGLMNMPEFADIDIVFDATSAGAHVKNDAALREAKPDIRLIDLTPAAIGPYCVPVVNLEANVDQLNVNMVTCGGQATIPMVAAVSRVARVHYAEIIASIASKSAGPGTRANIDEFTETTSRAIEVVGGAAKGKAIIVLNPAEPPLMMRDTVYVLSDEASQDDIEASINEMAEAVQAYVPGYRLKQRVQFEVIPQDKPVNLPGVGQFSGLKTAVWLEVEGAAHYLPAYAGNLDIMTSSALATAEKMAQSLARKAGEAA</sequence>